<gene>
    <name type="ordered locus">YEL025C</name>
</gene>
<sequence>MARQDETDCKKLDSNSAFLPLCITSYRSKDEAEKLVSCLHHEGSYFLCFSYGLYTGTSNELKAKVEFALDGPFVVNYATVPMFMSASFCHLLMFNDGSIKGFKCENNKFEIIYDSNVAPKLDTISLLTSSWLNASFEGVLYTCNKNISYDSDLHTLCTTIYSFDFREGIVERFYATDGEEIISFDFISREDLLDDATCTGKSHVYFLCLLKSCYSENLFLKEYNLAGKHGSRKFDLNEYRQYNLLPICDNEFCYMKVVCGHTIVVLTTNYTQIINIKASGLTNGAFFNNKGLPNVENYQFLKDSYDVIYERSVILLTISDVYANKYTAKIHTRSLHRDHVLKELQWTKERVFKPPKHDLCDVILQLPREKYIAVTRINGVNFISKDHRGSKLEKVKSGPAYTNKVYLASQVIGNKGTDIDSLLLGGSFNSRRGFLEKKILVYDKTLFKLVTSSKALVENVTDFWVTDLALNGGDEFAYESGGLIYKNGIFLMDEPYDYGLFVSRTGKVLKAGMDGSTGEFRQVDFLQSNHNSSTMFCYPVQNSKLRISILEAKSGFLRKKEEFFIHGLNSKESIVSCFSDGAEKYLFVIYLDGVFSVWNANQKKVATSHPDYSFIAYDQLIKISWLSKKHKHDSIYVIASSYTGCVRVYKSESNFLRVDLEIHSLYDQKLELLDTIPSLPLVFLYNDKEIILLNLQNMSYGCIQLGLVPRRMRIRPGKALFSLCVLDYDSRISIFEFGSTFYREGFTKQMTSLKPQLENHIFYLPSIPVELYTVPNNLNQAVVCLVDSNSRQYKLMLFNYASMKAVSTFSFSDEKYLHAVVKPLWPEQNSIYLSQRPFYGNKFVVCLGVGEKRTKFWLFEIRNNNITQLYANYLEDCIFSVFIYYECNLVLFSGDSGIAAYKINMLKEGAEILEAYSFPALSSINHIGLPAYMSGDYLVQFEILRDFLRTRFPIRTSIVYPSEYPECPYLGFKRLGSITQVATKIIPKKLREPKNDCLASDKNYLLGRLSDLSCATLKYSNRSYVATIGIDNTLTIYEDSKLSVDKGGLAMPYLKIRLPNKIISLAAIPDGFQNLQICPNFNSQRLEGVIPLFLLCGTEGQIYIISEFIGELWMRTLHDYKKIKLECKRAFRRSEKSMRNVTKQYSVSKETGINESGFDELARNSKRRHIDHSPYKTIDFFDPVKLKR</sequence>
<organism>
    <name type="scientific">Saccharomyces cerevisiae (strain ATCC 204508 / S288c)</name>
    <name type="common">Baker's yeast</name>
    <dbReference type="NCBI Taxonomy" id="559292"/>
    <lineage>
        <taxon>Eukaryota</taxon>
        <taxon>Fungi</taxon>
        <taxon>Dikarya</taxon>
        <taxon>Ascomycota</taxon>
        <taxon>Saccharomycotina</taxon>
        <taxon>Saccharomycetes</taxon>
        <taxon>Saccharomycetales</taxon>
        <taxon>Saccharomycetaceae</taxon>
        <taxon>Saccharomyces</taxon>
    </lineage>
</organism>
<reference key="1">
    <citation type="journal article" date="1997" name="Nature">
        <title>The nucleotide sequence of Saccharomyces cerevisiae chromosome V.</title>
        <authorList>
            <person name="Dietrich F.S."/>
            <person name="Mulligan J.T."/>
            <person name="Hennessy K.M."/>
            <person name="Yelton M.A."/>
            <person name="Allen E."/>
            <person name="Araujo R."/>
            <person name="Aviles E."/>
            <person name="Berno A."/>
            <person name="Brennan T."/>
            <person name="Carpenter J."/>
            <person name="Chen E."/>
            <person name="Cherry J.M."/>
            <person name="Chung E."/>
            <person name="Duncan M."/>
            <person name="Guzman E."/>
            <person name="Hartzell G."/>
            <person name="Hunicke-Smith S."/>
            <person name="Hyman R.W."/>
            <person name="Kayser A."/>
            <person name="Komp C."/>
            <person name="Lashkari D."/>
            <person name="Lew H."/>
            <person name="Lin D."/>
            <person name="Mosedale D."/>
            <person name="Nakahara K."/>
            <person name="Namath A."/>
            <person name="Norgren R."/>
            <person name="Oefner P."/>
            <person name="Oh C."/>
            <person name="Petel F.X."/>
            <person name="Roberts D."/>
            <person name="Sehl P."/>
            <person name="Schramm S."/>
            <person name="Shogren T."/>
            <person name="Smith V."/>
            <person name="Taylor P."/>
            <person name="Wei Y."/>
            <person name="Botstein D."/>
            <person name="Davis R.W."/>
        </authorList>
    </citation>
    <scope>NUCLEOTIDE SEQUENCE [LARGE SCALE GENOMIC DNA]</scope>
    <source>
        <strain>ATCC 204508 / S288c</strain>
    </source>
</reference>
<reference key="2">
    <citation type="journal article" date="2014" name="G3 (Bethesda)">
        <title>The reference genome sequence of Saccharomyces cerevisiae: Then and now.</title>
        <authorList>
            <person name="Engel S.R."/>
            <person name="Dietrich F.S."/>
            <person name="Fisk D.G."/>
            <person name="Binkley G."/>
            <person name="Balakrishnan R."/>
            <person name="Costanzo M.C."/>
            <person name="Dwight S.S."/>
            <person name="Hitz B.C."/>
            <person name="Karra K."/>
            <person name="Nash R.S."/>
            <person name="Weng S."/>
            <person name="Wong E.D."/>
            <person name="Lloyd P."/>
            <person name="Skrzypek M.S."/>
            <person name="Miyasato S.R."/>
            <person name="Simison M."/>
            <person name="Cherry J.M."/>
        </authorList>
    </citation>
    <scope>GENOME REANNOTATION</scope>
    <source>
        <strain>ATCC 204508 / S288c</strain>
    </source>
</reference>
<name>YEC5_YEAST</name>
<comment type="subcellular location">
    <subcellularLocation>
        <location evidence="2">Membrane</location>
        <topology evidence="2">Multi-pass membrane protein</topology>
    </subcellularLocation>
</comment>
<evidence type="ECO:0000255" key="1"/>
<evidence type="ECO:0000305" key="2"/>
<feature type="chain" id="PRO_0000202609" description="Uncharacterized protein YEL025C">
    <location>
        <begin position="1"/>
        <end position="1188"/>
    </location>
</feature>
<feature type="transmembrane region" description="Helical" evidence="1">
    <location>
        <begin position="73"/>
        <end position="93"/>
    </location>
</feature>
<feature type="transmembrane region" description="Helical" evidence="1">
    <location>
        <begin position="878"/>
        <end position="898"/>
    </location>
</feature>
<feature type="transmembrane region" description="Helical" evidence="1">
    <location>
        <begin position="1089"/>
        <end position="1109"/>
    </location>
</feature>
<proteinExistence type="predicted"/>
<dbReference type="EMBL" id="U18530">
    <property type="protein sequence ID" value="AAB64502.1"/>
    <property type="molecule type" value="Genomic_DNA"/>
</dbReference>
<dbReference type="EMBL" id="BK006939">
    <property type="protein sequence ID" value="DAA07627.1"/>
    <property type="molecule type" value="Genomic_DNA"/>
</dbReference>
<dbReference type="PIR" id="S50434">
    <property type="entry name" value="S50434"/>
</dbReference>
<dbReference type="RefSeq" id="NP_010889.1">
    <property type="nucleotide sequence ID" value="NM_001178840.1"/>
</dbReference>
<dbReference type="SMR" id="P39991"/>
<dbReference type="BioGRID" id="36704">
    <property type="interactions" value="26"/>
</dbReference>
<dbReference type="FunCoup" id="P39991">
    <property type="interactions" value="31"/>
</dbReference>
<dbReference type="IntAct" id="P39991">
    <property type="interactions" value="1"/>
</dbReference>
<dbReference type="MINT" id="P39991"/>
<dbReference type="STRING" id="4932.YEL025C"/>
<dbReference type="iPTMnet" id="P39991"/>
<dbReference type="PaxDb" id="4932-YEL025C"/>
<dbReference type="PeptideAtlas" id="P39991"/>
<dbReference type="EnsemblFungi" id="YEL025C_mRNA">
    <property type="protein sequence ID" value="YEL025C"/>
    <property type="gene ID" value="YEL025C"/>
</dbReference>
<dbReference type="GeneID" id="856688"/>
<dbReference type="KEGG" id="sce:YEL025C"/>
<dbReference type="AGR" id="SGD:S000000751"/>
<dbReference type="SGD" id="S000000751">
    <property type="gene designation" value="YEL025C"/>
</dbReference>
<dbReference type="VEuPathDB" id="FungiDB:YEL025C"/>
<dbReference type="eggNOG" id="ENOG502SAD7">
    <property type="taxonomic scope" value="Eukaryota"/>
</dbReference>
<dbReference type="HOGENOM" id="CLU_007972_0_0_1"/>
<dbReference type="InParanoid" id="P39991"/>
<dbReference type="OrthoDB" id="4038967at2759"/>
<dbReference type="BioCyc" id="YEAST:G3O-30148-MONOMER"/>
<dbReference type="BioGRID-ORCS" id="856688">
    <property type="hits" value="0 hits in 10 CRISPR screens"/>
</dbReference>
<dbReference type="PRO" id="PR:P39991"/>
<dbReference type="Proteomes" id="UP000002311">
    <property type="component" value="Chromosome V"/>
</dbReference>
<dbReference type="RNAct" id="P39991">
    <property type="molecule type" value="protein"/>
</dbReference>
<dbReference type="GO" id="GO:0005737">
    <property type="term" value="C:cytoplasm"/>
    <property type="evidence" value="ECO:0007005"/>
    <property type="project" value="SGD"/>
</dbReference>
<dbReference type="GO" id="GO:0016020">
    <property type="term" value="C:membrane"/>
    <property type="evidence" value="ECO:0007669"/>
    <property type="project" value="UniProtKB-SubCell"/>
</dbReference>
<dbReference type="GO" id="GO:0005634">
    <property type="term" value="C:nucleus"/>
    <property type="evidence" value="ECO:0007005"/>
    <property type="project" value="SGD"/>
</dbReference>
<dbReference type="InterPro" id="IPR036322">
    <property type="entry name" value="WD40_repeat_dom_sf"/>
</dbReference>
<dbReference type="SUPFAM" id="SSF50978">
    <property type="entry name" value="WD40 repeat-like"/>
    <property type="match status" value="1"/>
</dbReference>
<accession>P39991</accession>
<accession>D3DLM3</accession>
<protein>
    <recommendedName>
        <fullName>Uncharacterized protein YEL025C</fullName>
    </recommendedName>
</protein>
<keyword id="KW-0472">Membrane</keyword>
<keyword id="KW-1185">Reference proteome</keyword>
<keyword id="KW-0812">Transmembrane</keyword>
<keyword id="KW-1133">Transmembrane helix</keyword>